<organism>
    <name type="scientific">Homo sapiens</name>
    <name type="common">Human</name>
    <dbReference type="NCBI Taxonomy" id="9606"/>
    <lineage>
        <taxon>Eukaryota</taxon>
        <taxon>Metazoa</taxon>
        <taxon>Chordata</taxon>
        <taxon>Craniata</taxon>
        <taxon>Vertebrata</taxon>
        <taxon>Euteleostomi</taxon>
        <taxon>Mammalia</taxon>
        <taxon>Eutheria</taxon>
        <taxon>Euarchontoglires</taxon>
        <taxon>Primates</taxon>
        <taxon>Haplorrhini</taxon>
        <taxon>Catarrhini</taxon>
        <taxon>Hominidae</taxon>
        <taxon>Homo</taxon>
    </lineage>
</organism>
<proteinExistence type="evidence at protein level"/>
<comment type="function">
    <text evidence="6 7">Mitochondrial citramalyl-CoA lyase indirectly involved in the vitamin B12 metabolism (PubMed:29056341). Converts citramalyl-CoA into acetyl-CoA and pyruvate in the C5-dicarboxylate catabolism pathway (PubMed:29056341). The C5-dicarboxylate catabolism pathway is required to detoxify itaconate, a vitamin B12-poisoning metabolite (PubMed:29056341). Also acts as a malate synthase in vitro, converting glyoxylate and acetyl-CoA to malate (PubMed:24334609, PubMed:29056341). Also displays malyl-CoA thioesterase activity (PubMed:29056341). Also acts as a beta-methylmalate synthase in vitro, by mediating conversion of glyoxylate and propionyl-CoA to beta-methylmalate (PubMed:24334609, PubMed:29056341). Also has very weak citramalate synthase activity in vitro (PubMed:24334609, PubMed:29056341).</text>
</comment>
<comment type="catalytic activity">
    <reaction evidence="6 7">
        <text>glyoxylate + acetyl-CoA + H2O = (S)-malate + CoA + H(+)</text>
        <dbReference type="Rhea" id="RHEA:18181"/>
        <dbReference type="ChEBI" id="CHEBI:15377"/>
        <dbReference type="ChEBI" id="CHEBI:15378"/>
        <dbReference type="ChEBI" id="CHEBI:15589"/>
        <dbReference type="ChEBI" id="CHEBI:36655"/>
        <dbReference type="ChEBI" id="CHEBI:57287"/>
        <dbReference type="ChEBI" id="CHEBI:57288"/>
        <dbReference type="EC" id="2.3.3.9"/>
    </reaction>
</comment>
<comment type="catalytic activity">
    <reaction evidence="6 7">
        <text>propanoyl-CoA + glyoxylate + H2O = 3-methylmalate + CoA + H(+)</text>
        <dbReference type="Rhea" id="RHEA:47628"/>
        <dbReference type="ChEBI" id="CHEBI:15377"/>
        <dbReference type="ChEBI" id="CHEBI:15378"/>
        <dbReference type="ChEBI" id="CHEBI:36655"/>
        <dbReference type="ChEBI" id="CHEBI:57287"/>
        <dbReference type="ChEBI" id="CHEBI:57392"/>
        <dbReference type="ChEBI" id="CHEBI:87810"/>
    </reaction>
</comment>
<comment type="catalytic activity">
    <reaction evidence="7">
        <text>(3S)-citramalyl-CoA = pyruvate + acetyl-CoA</text>
        <dbReference type="Rhea" id="RHEA:22612"/>
        <dbReference type="ChEBI" id="CHEBI:15361"/>
        <dbReference type="ChEBI" id="CHEBI:57288"/>
        <dbReference type="ChEBI" id="CHEBI:58668"/>
        <dbReference type="EC" id="4.1.3.25"/>
    </reaction>
</comment>
<comment type="catalytic activity">
    <reaction evidence="7">
        <text>(S)-malyl-CoA + H2O = (S)-malate + CoA + H(+)</text>
        <dbReference type="Rhea" id="RHEA:38291"/>
        <dbReference type="ChEBI" id="CHEBI:15377"/>
        <dbReference type="ChEBI" id="CHEBI:15378"/>
        <dbReference type="ChEBI" id="CHEBI:15589"/>
        <dbReference type="ChEBI" id="CHEBI:57287"/>
        <dbReference type="ChEBI" id="CHEBI:57317"/>
        <dbReference type="EC" id="3.1.2.30"/>
    </reaction>
    <physiologicalReaction direction="left-to-right" evidence="10">
        <dbReference type="Rhea" id="RHEA:38292"/>
    </physiologicalReaction>
</comment>
<comment type="cofactor">
    <cofactor evidence="6 7">
        <name>Mg(2+)</name>
        <dbReference type="ChEBI" id="CHEBI:18420"/>
    </cofactor>
    <text evidence="7">Binds 1 Mg(2+) ion per subunit.</text>
</comment>
<comment type="biophysicochemical properties">
    <kinetics>
        <KM evidence="6">3.6 mM for glyoxylate (with acetyl-CoA as cosubstrate)</KM>
        <KM evidence="6">1.2 mM for glyoxylate (with propionyl-CoA as cosubstrate)</KM>
        <KM evidence="7">28.7 uM for propionyl-CoA (for beta-methylmalate synthase)</KM>
        <KM evidence="7">57.3 uM for acetyl-CoA (for malate synthase)</KM>
        <KM evidence="7">25 uM for acetyl-CoA (for citramalate synthase)</KM>
        <KM evidence="7">23 uM for (3S)-citramalyl-CoA (for citramalyl-CoA lyase)</KM>
        <KM evidence="6">74 uM for acetyl-CoA</KM>
        <KM evidence="6">23 uM for propionyl-CoA</KM>
        <text evidence="6 7">kcat is 0.12 sec(-1) for malate synthase reaction (PubMed:24334609). kcat is 0.09 sec(-1) for beta-methylmalate synthase reaction (PubMed:24334609). kcat is 0.135 sec(-1) for beta-methylmalate synthase reaction (PubMed:29056341). kcat is 0.146 sec(-1) for malate synthase reaction (PubMed:29056341). kcat is 0.08 sec(-1) for citramalate synthase reaction (PubMed:29056341). kcat is 14.1 sec(-1) for citramalyl-CoA lyase reaction (PubMed:29056341).</text>
    </kinetics>
</comment>
<comment type="subunit">
    <text evidence="7">Homotrimer.</text>
</comment>
<comment type="subcellular location">
    <subcellularLocation>
        <location evidence="1">Mitochondrion</location>
    </subcellularLocation>
</comment>
<comment type="alternative products">
    <event type="alternative splicing"/>
    <isoform>
        <id>Q8N0X4-1</id>
        <name>1</name>
        <sequence type="displayed"/>
    </isoform>
    <isoform>
        <id>Q8N0X4-2</id>
        <name>2</name>
        <sequence type="described" ref="VSP_034643"/>
    </isoform>
</comment>
<comment type="polymorphism">
    <text evidence="5 6 7">The protein is absent in 2.7% of the human population due to a loss-of-function polymorphism (rs41281112) that changes Arg-259 to a premature stop codon, leading to loss of the protein product (PubMed:23754956, PubMed:24334609). This polymorphism is associated with reduction of circulating vitamin B12 (PubMed:23754956, PubMed:24334609). The reduction of circulating vitamin B12 is caused by accumulation of citramalyl-CoA, an intermediate in the C5-dicarboxylate metabolic pathway that includes itaconate (PubMed:29056341). Itaconate acting as a vitamin B12-poisoning metabolite that inactivates the mitochondrial methylglutaconyl-CoA hydratase (AUH) enzyme (PubMed:29056341).</text>
</comment>
<comment type="similarity">
    <text evidence="9">Belongs to the HpcH/HpaI aldolase family. Citrate lyase beta subunit-like subfamily.</text>
</comment>
<comment type="caution">
    <text evidence="9">This organism lacks the other subunits that are necessary for ATP-independent citrate lyase activity. Even though this protein has clear similarity to citrate lyase beta subunit, it is expected to have a somewhat different enzyme activity.</text>
</comment>
<accession>Q8N0X4</accession>
<accession>Q5W0F7</accession>
<accession>Q8TDH8</accession>
<gene>
    <name evidence="11" type="primary">CLYBL</name>
    <name type="synonym">CLB</name>
</gene>
<feature type="transit peptide" description="Mitochondrion" evidence="2">
    <location>
        <begin position="1"/>
        <end position="22"/>
    </location>
</feature>
<feature type="chain" id="PRO_0000286389" description="Citramalyl-CoA lyase, mitochondrial">
    <location>
        <begin position="23"/>
        <end position="340"/>
    </location>
</feature>
<feature type="active site" evidence="7">
    <location>
        <position position="320"/>
    </location>
</feature>
<feature type="binding site" evidence="7 12 13">
    <location>
        <position position="50"/>
    </location>
    <ligand>
        <name>substrate</name>
    </ligand>
</feature>
<feature type="binding site" evidence="7 12 13">
    <location>
        <position position="57"/>
    </location>
    <ligand>
        <name>substrate</name>
    </ligand>
</feature>
<feature type="binding site" evidence="7 12 13">
    <location>
        <position position="61"/>
    </location>
    <ligand>
        <name>substrate</name>
    </ligand>
</feature>
<feature type="binding site" evidence="7 12 13">
    <location>
        <position position="107"/>
    </location>
    <ligand>
        <name>substrate</name>
    </ligand>
</feature>
<feature type="binding site" evidence="7 12">
    <location>
        <position position="171"/>
    </location>
    <ligand>
        <name>Mg(2+)</name>
        <dbReference type="ChEBI" id="CHEBI:18420"/>
    </ligand>
</feature>
<feature type="binding site" evidence="7 12">
    <location>
        <position position="206"/>
    </location>
    <ligand>
        <name>Mg(2+)</name>
        <dbReference type="ChEBI" id="CHEBI:18420"/>
    </ligand>
</feature>
<feature type="binding site" evidence="7 12 13">
    <location>
        <begin position="272"/>
        <end position="273"/>
    </location>
    <ligand>
        <name>substrate</name>
    </ligand>
</feature>
<feature type="modified residue" description="N6-acetyllysine" evidence="1">
    <location>
        <position position="57"/>
    </location>
</feature>
<feature type="modified residue" description="N6-acetyllysine" evidence="1">
    <location>
        <position position="61"/>
    </location>
</feature>
<feature type="modified residue" description="N6-acetyllysine; alternate" evidence="1">
    <location>
        <position position="82"/>
    </location>
</feature>
<feature type="modified residue" description="N6-succinyllysine; alternate" evidence="1">
    <location>
        <position position="82"/>
    </location>
</feature>
<feature type="modified residue" description="N6-acetyllysine; alternate" evidence="1">
    <location>
        <position position="92"/>
    </location>
</feature>
<feature type="modified residue" description="N6-succinyllysine; alternate" evidence="1">
    <location>
        <position position="92"/>
    </location>
</feature>
<feature type="modified residue" description="N6-succinyllysine" evidence="1">
    <location>
        <position position="309"/>
    </location>
</feature>
<feature type="splice variant" id="VSP_034643" description="In isoform 2." evidence="9">
    <location>
        <begin position="147"/>
        <end position="180"/>
    </location>
</feature>
<feature type="sequence variant" id="VAR_032099" description="In dbSNP:rs17577293.">
    <original>D</original>
    <variation>Y</variation>
    <location>
        <position position="28"/>
    </location>
</feature>
<feature type="sequence variant" id="VAR_032100" description="In dbSNP:rs35680839.">
    <original>V</original>
    <variation>I</variation>
    <location>
        <position position="128"/>
    </location>
</feature>
<feature type="sequence variant" id="VAR_032101" description="In dbSNP:rs3783185." evidence="3 4">
    <original>I</original>
    <variation>V</variation>
    <location>
        <position position="241"/>
    </location>
</feature>
<feature type="sequence variant" id="VAR_073420" description="Loss of the protein product; reduction of circulating vitamin B12; dbSNP:rs41281112." evidence="5 6">
    <location>
        <begin position="259"/>
        <end position="340"/>
    </location>
</feature>
<feature type="mutagenesis site" description="Abolishes citramalyl-CoA lyase activity." evidence="7">
    <original>D</original>
    <variation>A</variation>
    <variation>N</variation>
    <location>
        <position position="320"/>
    </location>
</feature>
<feature type="strand" evidence="14">
    <location>
        <begin position="46"/>
        <end position="52"/>
    </location>
</feature>
<feature type="helix" evidence="14">
    <location>
        <begin position="56"/>
        <end position="61"/>
    </location>
</feature>
<feature type="helix" evidence="14">
    <location>
        <begin position="62"/>
        <end position="64"/>
    </location>
</feature>
<feature type="strand" evidence="14">
    <location>
        <begin position="68"/>
        <end position="75"/>
    </location>
</feature>
<feature type="helix" evidence="14">
    <location>
        <begin position="80"/>
        <end position="82"/>
    </location>
</feature>
<feature type="helix" evidence="14">
    <location>
        <begin position="83"/>
        <end position="96"/>
    </location>
</feature>
<feature type="strand" evidence="14">
    <location>
        <begin position="101"/>
        <end position="107"/>
    </location>
</feature>
<feature type="helix" evidence="14">
    <location>
        <begin position="111"/>
        <end position="113"/>
    </location>
</feature>
<feature type="helix" evidence="14">
    <location>
        <begin position="116"/>
        <end position="123"/>
    </location>
</feature>
<feature type="strand" evidence="14">
    <location>
        <begin position="131"/>
        <end position="135"/>
    </location>
</feature>
<feature type="helix" evidence="14">
    <location>
        <begin position="141"/>
        <end position="154"/>
    </location>
</feature>
<feature type="turn" evidence="14">
    <location>
        <begin position="155"/>
        <end position="157"/>
    </location>
</feature>
<feature type="strand" evidence="14">
    <location>
        <begin position="164"/>
        <end position="170"/>
    </location>
</feature>
<feature type="helix" evidence="14">
    <location>
        <begin position="173"/>
        <end position="177"/>
    </location>
</feature>
<feature type="helix" evidence="14">
    <location>
        <begin position="179"/>
        <end position="189"/>
    </location>
</feature>
<feature type="helix" evidence="14">
    <location>
        <begin position="191"/>
        <end position="193"/>
    </location>
</feature>
<feature type="strand" evidence="14">
    <location>
        <begin position="195"/>
        <end position="197"/>
    </location>
</feature>
<feature type="strand" evidence="14">
    <location>
        <begin position="199"/>
        <end position="202"/>
    </location>
</feature>
<feature type="helix" evidence="14">
    <location>
        <begin position="204"/>
        <end position="211"/>
    </location>
</feature>
<feature type="helix" evidence="14">
    <location>
        <begin position="220"/>
        <end position="222"/>
    </location>
</feature>
<feature type="helix" evidence="14">
    <location>
        <begin position="223"/>
        <end position="235"/>
    </location>
</feature>
<feature type="strand" evidence="14">
    <location>
        <begin position="239"/>
        <end position="242"/>
    </location>
</feature>
<feature type="helix" evidence="14">
    <location>
        <begin position="251"/>
        <end position="264"/>
    </location>
</feature>
<feature type="strand" evidence="14">
    <location>
        <begin position="268"/>
        <end position="273"/>
    </location>
</feature>
<feature type="helix" evidence="14">
    <location>
        <begin position="274"/>
        <end position="276"/>
    </location>
</feature>
<feature type="helix" evidence="14">
    <location>
        <begin position="277"/>
        <end position="283"/>
    </location>
</feature>
<feature type="helix" evidence="14">
    <location>
        <begin position="288"/>
        <end position="306"/>
    </location>
</feature>
<feature type="strand" evidence="14">
    <location>
        <begin position="310"/>
        <end position="314"/>
    </location>
</feature>
<feature type="strand" evidence="14">
    <location>
        <begin position="317"/>
        <end position="319"/>
    </location>
</feature>
<feature type="helix" evidence="14">
    <location>
        <begin position="321"/>
        <end position="336"/>
    </location>
</feature>
<keyword id="KW-0002">3D-structure</keyword>
<keyword id="KW-0007">Acetylation</keyword>
<keyword id="KW-0025">Alternative splicing</keyword>
<keyword id="KW-0378">Hydrolase</keyword>
<keyword id="KW-0456">Lyase</keyword>
<keyword id="KW-0460">Magnesium</keyword>
<keyword id="KW-0479">Metal-binding</keyword>
<keyword id="KW-0496">Mitochondrion</keyword>
<keyword id="KW-1267">Proteomics identification</keyword>
<keyword id="KW-1185">Reference proteome</keyword>
<keyword id="KW-0808">Transferase</keyword>
<keyword id="KW-0809">Transit peptide</keyword>
<protein>
    <recommendedName>
        <fullName evidence="8">Citramalyl-CoA lyase, mitochondrial</fullName>
        <ecNumber evidence="7">4.1.3.25</ecNumber>
    </recommendedName>
    <alternativeName>
        <fullName evidence="10">(3S)-malyl-CoA thioesterase</fullName>
        <ecNumber evidence="7">3.1.2.30</ecNumber>
    </alternativeName>
    <alternativeName>
        <fullName>Beta-methylmalate synthase</fullName>
        <ecNumber evidence="6 7">2.3.3.-</ecNumber>
    </alternativeName>
    <alternativeName>
        <fullName evidence="9">Citrate lyase subunit beta-like protein</fullName>
        <shortName evidence="9">Citrate lyase beta-like</shortName>
    </alternativeName>
    <alternativeName>
        <fullName>Malate synthase</fullName>
        <ecNumber evidence="6 7">2.3.3.9</ecNumber>
    </alternativeName>
</protein>
<name>CLYBL_HUMAN</name>
<evidence type="ECO:0000250" key="1">
    <source>
        <dbReference type="UniProtKB" id="Q8R4N0"/>
    </source>
</evidence>
<evidence type="ECO:0000255" key="2"/>
<evidence type="ECO:0000269" key="3">
    <source>
    </source>
</evidence>
<evidence type="ECO:0000269" key="4">
    <source>
    </source>
</evidence>
<evidence type="ECO:0000269" key="5">
    <source>
    </source>
</evidence>
<evidence type="ECO:0000269" key="6">
    <source>
    </source>
</evidence>
<evidence type="ECO:0000269" key="7">
    <source>
    </source>
</evidence>
<evidence type="ECO:0000303" key="8">
    <source>
    </source>
</evidence>
<evidence type="ECO:0000305" key="9"/>
<evidence type="ECO:0000305" key="10">
    <source>
    </source>
</evidence>
<evidence type="ECO:0000312" key="11">
    <source>
        <dbReference type="HGNC" id="HGNC:18355"/>
    </source>
</evidence>
<evidence type="ECO:0007744" key="12">
    <source>
        <dbReference type="PDB" id="5VXC"/>
    </source>
</evidence>
<evidence type="ECO:0007744" key="13">
    <source>
        <dbReference type="PDB" id="5VXO"/>
    </source>
</evidence>
<evidence type="ECO:0007829" key="14">
    <source>
        <dbReference type="PDB" id="5VXC"/>
    </source>
</evidence>
<dbReference type="EC" id="4.1.3.25" evidence="7"/>
<dbReference type="EC" id="3.1.2.30" evidence="7"/>
<dbReference type="EC" id="2.3.3.-" evidence="6 7"/>
<dbReference type="EC" id="2.3.3.9" evidence="6 7"/>
<dbReference type="EMBL" id="AF428253">
    <property type="protein sequence ID" value="AAL84703.1"/>
    <property type="molecule type" value="mRNA"/>
</dbReference>
<dbReference type="EMBL" id="AK095506">
    <property type="protein sequence ID" value="BAC04561.1"/>
    <property type="molecule type" value="mRNA"/>
</dbReference>
<dbReference type="EMBL" id="AL137139">
    <property type="status" value="NOT_ANNOTATED_CDS"/>
    <property type="molecule type" value="Genomic_DNA"/>
</dbReference>
<dbReference type="EMBL" id="AL139035">
    <property type="status" value="NOT_ANNOTATED_CDS"/>
    <property type="molecule type" value="Genomic_DNA"/>
</dbReference>
<dbReference type="EMBL" id="BC034360">
    <property type="protein sequence ID" value="AAH34360.1"/>
    <property type="molecule type" value="mRNA"/>
</dbReference>
<dbReference type="CCDS" id="CCDS32002.1">
    <molecule id="Q8N0X4-1"/>
</dbReference>
<dbReference type="CCDS" id="CCDS91830.1">
    <molecule id="Q8N0X4-2"/>
</dbReference>
<dbReference type="RefSeq" id="NP_001380284.1">
    <molecule id="Q8N0X4-2"/>
    <property type="nucleotide sequence ID" value="NM_001393355.1"/>
</dbReference>
<dbReference type="RefSeq" id="NP_001380285.1">
    <molecule id="Q8N0X4-1"/>
    <property type="nucleotide sequence ID" value="NM_001393356.1"/>
</dbReference>
<dbReference type="RefSeq" id="NP_001380286.1">
    <molecule id="Q8N0X4-1"/>
    <property type="nucleotide sequence ID" value="NM_001393357.1"/>
</dbReference>
<dbReference type="RefSeq" id="NP_001380287.1">
    <molecule id="Q8N0X4-1"/>
    <property type="nucleotide sequence ID" value="NM_001393358.1"/>
</dbReference>
<dbReference type="RefSeq" id="NP_001380288.1">
    <molecule id="Q8N0X4-1"/>
    <property type="nucleotide sequence ID" value="NM_001393359.2"/>
</dbReference>
<dbReference type="RefSeq" id="NP_001380289.1">
    <molecule id="Q8N0X4-2"/>
    <property type="nucleotide sequence ID" value="NM_001393360.1"/>
</dbReference>
<dbReference type="RefSeq" id="NP_001380290.1">
    <molecule id="Q8N0X4-2"/>
    <property type="nucleotide sequence ID" value="NM_001393361.1"/>
</dbReference>
<dbReference type="RefSeq" id="NP_001380291.1">
    <molecule id="Q8N0X4-2"/>
    <property type="nucleotide sequence ID" value="NM_001393362.1"/>
</dbReference>
<dbReference type="RefSeq" id="NP_996531.1">
    <molecule id="Q8N0X4-1"/>
    <property type="nucleotide sequence ID" value="NM_206808.5"/>
</dbReference>
<dbReference type="RefSeq" id="XP_005254087.1">
    <property type="nucleotide sequence ID" value="XM_005254030.2"/>
</dbReference>
<dbReference type="RefSeq" id="XP_005254088.1">
    <property type="nucleotide sequence ID" value="XM_005254031.2"/>
</dbReference>
<dbReference type="RefSeq" id="XP_006719978.1">
    <property type="nucleotide sequence ID" value="XM_006719915.3"/>
</dbReference>
<dbReference type="RefSeq" id="XP_011519353.1">
    <property type="nucleotide sequence ID" value="XM_011521051.2"/>
</dbReference>
<dbReference type="RefSeq" id="XP_011519354.1">
    <property type="nucleotide sequence ID" value="XM_011521052.2"/>
</dbReference>
<dbReference type="RefSeq" id="XP_016875891.1">
    <property type="nucleotide sequence ID" value="XM_017020402.1"/>
</dbReference>
<dbReference type="PDB" id="5VXC">
    <property type="method" value="X-ray"/>
    <property type="resolution" value="1.87 A"/>
    <property type="chains" value="A=30-340"/>
</dbReference>
<dbReference type="PDB" id="5VXO">
    <property type="method" value="X-ray"/>
    <property type="resolution" value="2.27 A"/>
    <property type="chains" value="A/B/C=30-340"/>
</dbReference>
<dbReference type="PDB" id="5VXS">
    <property type="method" value="X-ray"/>
    <property type="resolution" value="2.95 A"/>
    <property type="chains" value="A/B/C/D/E/F=30-340"/>
</dbReference>
<dbReference type="PDBsum" id="5VXC"/>
<dbReference type="PDBsum" id="5VXO"/>
<dbReference type="PDBsum" id="5VXS"/>
<dbReference type="SMR" id="Q8N0X4"/>
<dbReference type="BioGRID" id="128126">
    <property type="interactions" value="15"/>
</dbReference>
<dbReference type="FunCoup" id="Q8N0X4">
    <property type="interactions" value="188"/>
</dbReference>
<dbReference type="IntAct" id="Q8N0X4">
    <property type="interactions" value="6"/>
</dbReference>
<dbReference type="STRING" id="9606.ENSP00000365533"/>
<dbReference type="SwissLipids" id="SLP:000001839"/>
<dbReference type="iPTMnet" id="Q8N0X4"/>
<dbReference type="PhosphoSitePlus" id="Q8N0X4"/>
<dbReference type="SwissPalm" id="Q8N0X4"/>
<dbReference type="BioMuta" id="CLYBL"/>
<dbReference type="DMDM" id="146286073"/>
<dbReference type="jPOST" id="Q8N0X4"/>
<dbReference type="MassIVE" id="Q8N0X4"/>
<dbReference type="PaxDb" id="9606-ENSP00000365533"/>
<dbReference type="PeptideAtlas" id="Q8N0X4"/>
<dbReference type="ProteomicsDB" id="71483">
    <molecule id="Q8N0X4-1"/>
</dbReference>
<dbReference type="ProteomicsDB" id="71484">
    <molecule id="Q8N0X4-2"/>
</dbReference>
<dbReference type="Pumba" id="Q8N0X4"/>
<dbReference type="Antibodypedia" id="25197">
    <property type="antibodies" value="61 antibodies from 16 providers"/>
</dbReference>
<dbReference type="DNASU" id="171425"/>
<dbReference type="Ensembl" id="ENST00000339105.9">
    <molecule id="Q8N0X4-1"/>
    <property type="protein sequence ID" value="ENSP00000342991.4"/>
    <property type="gene ID" value="ENSG00000125246.16"/>
</dbReference>
<dbReference type="Ensembl" id="ENST00000376354.5">
    <molecule id="Q8N0X4-2"/>
    <property type="protein sequence ID" value="ENSP00000365532.1"/>
    <property type="gene ID" value="ENSG00000125246.16"/>
</dbReference>
<dbReference type="Ensembl" id="ENST00000376355.7">
    <molecule id="Q8N0X4-1"/>
    <property type="protein sequence ID" value="ENSP00000365533.4"/>
    <property type="gene ID" value="ENSG00000125246.16"/>
</dbReference>
<dbReference type="Ensembl" id="ENST00000689673.1">
    <molecule id="Q8N0X4-1"/>
    <property type="protein sequence ID" value="ENSP00000509937.1"/>
    <property type="gene ID" value="ENSG00000125246.16"/>
</dbReference>
<dbReference type="Ensembl" id="ENST00000693071.1">
    <molecule id="Q8N0X4-2"/>
    <property type="protein sequence ID" value="ENSP00000508871.1"/>
    <property type="gene ID" value="ENSG00000125246.16"/>
</dbReference>
<dbReference type="GeneID" id="171425"/>
<dbReference type="KEGG" id="hsa:171425"/>
<dbReference type="MANE-Select" id="ENST00000339105.9">
    <property type="protein sequence ID" value="ENSP00000342991.4"/>
    <property type="RefSeq nucleotide sequence ID" value="NM_206808.5"/>
    <property type="RefSeq protein sequence ID" value="NP_996531.1"/>
</dbReference>
<dbReference type="UCSC" id="uc001vok.5">
    <molecule id="Q8N0X4-1"/>
    <property type="organism name" value="human"/>
</dbReference>
<dbReference type="AGR" id="HGNC:18355"/>
<dbReference type="CTD" id="171425"/>
<dbReference type="DisGeNET" id="171425"/>
<dbReference type="GeneCards" id="CLYBL"/>
<dbReference type="HGNC" id="HGNC:18355">
    <property type="gene designation" value="CLYBL"/>
</dbReference>
<dbReference type="HPA" id="ENSG00000125246">
    <property type="expression patterns" value="Tissue enhanced (liver)"/>
</dbReference>
<dbReference type="MIM" id="609686">
    <property type="type" value="gene"/>
</dbReference>
<dbReference type="neXtProt" id="NX_Q8N0X4"/>
<dbReference type="OpenTargets" id="ENSG00000125246"/>
<dbReference type="PharmGKB" id="PA26622"/>
<dbReference type="VEuPathDB" id="HostDB:ENSG00000125246"/>
<dbReference type="eggNOG" id="ENOG502QQPK">
    <property type="taxonomic scope" value="Eukaryota"/>
</dbReference>
<dbReference type="GeneTree" id="ENSGT00390000017163"/>
<dbReference type="HOGENOM" id="CLU_044864_1_0_1"/>
<dbReference type="InParanoid" id="Q8N0X4"/>
<dbReference type="OMA" id="AWLFCPA"/>
<dbReference type="OrthoDB" id="1773at2759"/>
<dbReference type="PAN-GO" id="Q8N0X4">
    <property type="GO annotations" value="2 GO annotations based on evolutionary models"/>
</dbReference>
<dbReference type="PhylomeDB" id="Q8N0X4"/>
<dbReference type="TreeFam" id="TF313596"/>
<dbReference type="BioCyc" id="MetaCyc:HS04862-MONOMER"/>
<dbReference type="BRENDA" id="4.1.3.6">
    <property type="organism ID" value="2681"/>
</dbReference>
<dbReference type="PathwayCommons" id="Q8N0X4"/>
<dbReference type="BioGRID-ORCS" id="171425">
    <property type="hits" value="11 hits in 1158 CRISPR screens"/>
</dbReference>
<dbReference type="ChiTaRS" id="CLYBL">
    <property type="organism name" value="human"/>
</dbReference>
<dbReference type="GenomeRNAi" id="171425"/>
<dbReference type="Pharos" id="Q8N0X4">
    <property type="development level" value="Tbio"/>
</dbReference>
<dbReference type="PRO" id="PR:Q8N0X4"/>
<dbReference type="Proteomes" id="UP000005640">
    <property type="component" value="Chromosome 13"/>
</dbReference>
<dbReference type="RNAct" id="Q8N0X4">
    <property type="molecule type" value="protein"/>
</dbReference>
<dbReference type="Bgee" id="ENSG00000125246">
    <property type="expression patterns" value="Expressed in kidney epithelium and 168 other cell types or tissues"/>
</dbReference>
<dbReference type="ExpressionAtlas" id="Q8N0X4">
    <property type="expression patterns" value="baseline and differential"/>
</dbReference>
<dbReference type="GO" id="GO:0005739">
    <property type="term" value="C:mitochondrion"/>
    <property type="evidence" value="ECO:0006056"/>
    <property type="project" value="FlyBase"/>
</dbReference>
<dbReference type="GO" id="GO:0047777">
    <property type="term" value="F:(S)-citramalyl-CoA lyase activity"/>
    <property type="evidence" value="ECO:0000314"/>
    <property type="project" value="UniProtKB"/>
</dbReference>
<dbReference type="GO" id="GO:0016787">
    <property type="term" value="F:hydrolase activity"/>
    <property type="evidence" value="ECO:0007669"/>
    <property type="project" value="UniProtKB-KW"/>
</dbReference>
<dbReference type="GO" id="GO:0000287">
    <property type="term" value="F:magnesium ion binding"/>
    <property type="evidence" value="ECO:0000314"/>
    <property type="project" value="UniProtKB"/>
</dbReference>
<dbReference type="GO" id="GO:0004474">
    <property type="term" value="F:malate synthase activity"/>
    <property type="evidence" value="ECO:0000314"/>
    <property type="project" value="UniProtKB"/>
</dbReference>
<dbReference type="GO" id="GO:0106121">
    <property type="term" value="P:positive regulation of cobalamin metabolic process"/>
    <property type="evidence" value="ECO:0007669"/>
    <property type="project" value="Ensembl"/>
</dbReference>
<dbReference type="GO" id="GO:0070207">
    <property type="term" value="P:protein homotrimerization"/>
    <property type="evidence" value="ECO:0000314"/>
    <property type="project" value="UniProtKB"/>
</dbReference>
<dbReference type="GO" id="GO:0106064">
    <property type="term" value="P:regulation of cobalamin metabolic process"/>
    <property type="evidence" value="ECO:0000314"/>
    <property type="project" value="UniProtKB"/>
</dbReference>
<dbReference type="FunFam" id="3.20.20.60:FF:000014">
    <property type="entry name" value="Citrate lyase subunit beta-like protein"/>
    <property type="match status" value="1"/>
</dbReference>
<dbReference type="Gene3D" id="3.20.20.60">
    <property type="entry name" value="Phosphoenolpyruvate-binding domains"/>
    <property type="match status" value="1"/>
</dbReference>
<dbReference type="InterPro" id="IPR005000">
    <property type="entry name" value="Aldolase/citrate-lyase_domain"/>
</dbReference>
<dbReference type="InterPro" id="IPR040186">
    <property type="entry name" value="Citramalyl-CoA_lyase"/>
</dbReference>
<dbReference type="InterPro" id="IPR011206">
    <property type="entry name" value="Citrate_lyase_beta/mcl1/mcl2"/>
</dbReference>
<dbReference type="InterPro" id="IPR015813">
    <property type="entry name" value="Pyrv/PenolPyrv_kinase-like_dom"/>
</dbReference>
<dbReference type="InterPro" id="IPR040442">
    <property type="entry name" value="Pyrv_kinase-like_dom_sf"/>
</dbReference>
<dbReference type="PANTHER" id="PTHR11105:SF0">
    <property type="entry name" value="CITRAMALYL-COA LYASE, MITOCHONDRIAL"/>
    <property type="match status" value="1"/>
</dbReference>
<dbReference type="PANTHER" id="PTHR11105">
    <property type="entry name" value="CITRATE LYASE SUBUNIT BETA-RELATED"/>
    <property type="match status" value="1"/>
</dbReference>
<dbReference type="Pfam" id="PF03328">
    <property type="entry name" value="HpcH_HpaI"/>
    <property type="match status" value="1"/>
</dbReference>
<dbReference type="PIRSF" id="PIRSF015582">
    <property type="entry name" value="Cit_lyase_B"/>
    <property type="match status" value="1"/>
</dbReference>
<dbReference type="SUPFAM" id="SSF51621">
    <property type="entry name" value="Phosphoenolpyruvate/pyruvate domain"/>
    <property type="match status" value="1"/>
</dbReference>
<reference key="1">
    <citation type="journal article" date="2001" name="Biochem. Biophys. Res. Commun.">
        <title>Molecular cloning of novel mouse and human putative citrate lyase beta-subunit.</title>
        <authorList>
            <person name="Morikawa J."/>
            <person name="Nishimura Y."/>
            <person name="Uchida A."/>
            <person name="Tanaka T."/>
        </authorList>
    </citation>
    <scope>NUCLEOTIDE SEQUENCE [MRNA] (ISOFORM 1)</scope>
</reference>
<reference key="2">
    <citation type="journal article" date="2004" name="Nat. Genet.">
        <title>Complete sequencing and characterization of 21,243 full-length human cDNAs.</title>
        <authorList>
            <person name="Ota T."/>
            <person name="Suzuki Y."/>
            <person name="Nishikawa T."/>
            <person name="Otsuki T."/>
            <person name="Sugiyama T."/>
            <person name="Irie R."/>
            <person name="Wakamatsu A."/>
            <person name="Hayashi K."/>
            <person name="Sato H."/>
            <person name="Nagai K."/>
            <person name="Kimura K."/>
            <person name="Makita H."/>
            <person name="Sekine M."/>
            <person name="Obayashi M."/>
            <person name="Nishi T."/>
            <person name="Shibahara T."/>
            <person name="Tanaka T."/>
            <person name="Ishii S."/>
            <person name="Yamamoto J."/>
            <person name="Saito K."/>
            <person name="Kawai Y."/>
            <person name="Isono Y."/>
            <person name="Nakamura Y."/>
            <person name="Nagahari K."/>
            <person name="Murakami K."/>
            <person name="Yasuda T."/>
            <person name="Iwayanagi T."/>
            <person name="Wagatsuma M."/>
            <person name="Shiratori A."/>
            <person name="Sudo H."/>
            <person name="Hosoiri T."/>
            <person name="Kaku Y."/>
            <person name="Kodaira H."/>
            <person name="Kondo H."/>
            <person name="Sugawara M."/>
            <person name="Takahashi M."/>
            <person name="Kanda K."/>
            <person name="Yokoi T."/>
            <person name="Furuya T."/>
            <person name="Kikkawa E."/>
            <person name="Omura Y."/>
            <person name="Abe K."/>
            <person name="Kamihara K."/>
            <person name="Katsuta N."/>
            <person name="Sato K."/>
            <person name="Tanikawa M."/>
            <person name="Yamazaki M."/>
            <person name="Ninomiya K."/>
            <person name="Ishibashi T."/>
            <person name="Yamashita H."/>
            <person name="Murakawa K."/>
            <person name="Fujimori K."/>
            <person name="Tanai H."/>
            <person name="Kimata M."/>
            <person name="Watanabe M."/>
            <person name="Hiraoka S."/>
            <person name="Chiba Y."/>
            <person name="Ishida S."/>
            <person name="Ono Y."/>
            <person name="Takiguchi S."/>
            <person name="Watanabe S."/>
            <person name="Yosida M."/>
            <person name="Hotuta T."/>
            <person name="Kusano J."/>
            <person name="Kanehori K."/>
            <person name="Takahashi-Fujii A."/>
            <person name="Hara H."/>
            <person name="Tanase T.-O."/>
            <person name="Nomura Y."/>
            <person name="Togiya S."/>
            <person name="Komai F."/>
            <person name="Hara R."/>
            <person name="Takeuchi K."/>
            <person name="Arita M."/>
            <person name="Imose N."/>
            <person name="Musashino K."/>
            <person name="Yuuki H."/>
            <person name="Oshima A."/>
            <person name="Sasaki N."/>
            <person name="Aotsuka S."/>
            <person name="Yoshikawa Y."/>
            <person name="Matsunawa H."/>
            <person name="Ichihara T."/>
            <person name="Shiohata N."/>
            <person name="Sano S."/>
            <person name="Moriya S."/>
            <person name="Momiyama H."/>
            <person name="Satoh N."/>
            <person name="Takami S."/>
            <person name="Terashima Y."/>
            <person name="Suzuki O."/>
            <person name="Nakagawa S."/>
            <person name="Senoh A."/>
            <person name="Mizoguchi H."/>
            <person name="Goto Y."/>
            <person name="Shimizu F."/>
            <person name="Wakebe H."/>
            <person name="Hishigaki H."/>
            <person name="Watanabe T."/>
            <person name="Sugiyama A."/>
            <person name="Takemoto M."/>
            <person name="Kawakami B."/>
            <person name="Yamazaki M."/>
            <person name="Watanabe K."/>
            <person name="Kumagai A."/>
            <person name="Itakura S."/>
            <person name="Fukuzumi Y."/>
            <person name="Fujimori Y."/>
            <person name="Komiyama M."/>
            <person name="Tashiro H."/>
            <person name="Tanigami A."/>
            <person name="Fujiwara T."/>
            <person name="Ono T."/>
            <person name="Yamada K."/>
            <person name="Fujii Y."/>
            <person name="Ozaki K."/>
            <person name="Hirao M."/>
            <person name="Ohmori Y."/>
            <person name="Kawabata A."/>
            <person name="Hikiji T."/>
            <person name="Kobatake N."/>
            <person name="Inagaki H."/>
            <person name="Ikema Y."/>
            <person name="Okamoto S."/>
            <person name="Okitani R."/>
            <person name="Kawakami T."/>
            <person name="Noguchi S."/>
            <person name="Itoh T."/>
            <person name="Shigeta K."/>
            <person name="Senba T."/>
            <person name="Matsumura K."/>
            <person name="Nakajima Y."/>
            <person name="Mizuno T."/>
            <person name="Morinaga M."/>
            <person name="Sasaki M."/>
            <person name="Togashi T."/>
            <person name="Oyama M."/>
            <person name="Hata H."/>
            <person name="Watanabe M."/>
            <person name="Komatsu T."/>
            <person name="Mizushima-Sugano J."/>
            <person name="Satoh T."/>
            <person name="Shirai Y."/>
            <person name="Takahashi Y."/>
            <person name="Nakagawa K."/>
            <person name="Okumura K."/>
            <person name="Nagase T."/>
            <person name="Nomura N."/>
            <person name="Kikuchi H."/>
            <person name="Masuho Y."/>
            <person name="Yamashita R."/>
            <person name="Nakai K."/>
            <person name="Yada T."/>
            <person name="Nakamura Y."/>
            <person name="Ohara O."/>
            <person name="Isogai T."/>
            <person name="Sugano S."/>
        </authorList>
    </citation>
    <scope>NUCLEOTIDE SEQUENCE [LARGE SCALE MRNA] (ISOFORM 1)</scope>
    <scope>VARIANT VAL-241</scope>
    <source>
        <tissue>Brain</tissue>
    </source>
</reference>
<reference key="3">
    <citation type="journal article" date="2004" name="Nature">
        <title>The DNA sequence and analysis of human chromosome 13.</title>
        <authorList>
            <person name="Dunham A."/>
            <person name="Matthews L.H."/>
            <person name="Burton J."/>
            <person name="Ashurst J.L."/>
            <person name="Howe K.L."/>
            <person name="Ashcroft K.J."/>
            <person name="Beare D.M."/>
            <person name="Burford D.C."/>
            <person name="Hunt S.E."/>
            <person name="Griffiths-Jones S."/>
            <person name="Jones M.C."/>
            <person name="Keenan S.J."/>
            <person name="Oliver K."/>
            <person name="Scott C.E."/>
            <person name="Ainscough R."/>
            <person name="Almeida J.P."/>
            <person name="Ambrose K.D."/>
            <person name="Andrews D.T."/>
            <person name="Ashwell R.I.S."/>
            <person name="Babbage A.K."/>
            <person name="Bagguley C.L."/>
            <person name="Bailey J."/>
            <person name="Bannerjee R."/>
            <person name="Barlow K.F."/>
            <person name="Bates K."/>
            <person name="Beasley H."/>
            <person name="Bird C.P."/>
            <person name="Bray-Allen S."/>
            <person name="Brown A.J."/>
            <person name="Brown J.Y."/>
            <person name="Burrill W."/>
            <person name="Carder C."/>
            <person name="Carter N.P."/>
            <person name="Chapman J.C."/>
            <person name="Clamp M.E."/>
            <person name="Clark S.Y."/>
            <person name="Clarke G."/>
            <person name="Clee C.M."/>
            <person name="Clegg S.C."/>
            <person name="Cobley V."/>
            <person name="Collins J.E."/>
            <person name="Corby N."/>
            <person name="Coville G.J."/>
            <person name="Deloukas P."/>
            <person name="Dhami P."/>
            <person name="Dunham I."/>
            <person name="Dunn M."/>
            <person name="Earthrowl M.E."/>
            <person name="Ellington A.G."/>
            <person name="Faulkner L."/>
            <person name="Frankish A.G."/>
            <person name="Frankland J."/>
            <person name="French L."/>
            <person name="Garner P."/>
            <person name="Garnett J."/>
            <person name="Gilbert J.G.R."/>
            <person name="Gilson C.J."/>
            <person name="Ghori J."/>
            <person name="Grafham D.V."/>
            <person name="Gribble S.M."/>
            <person name="Griffiths C."/>
            <person name="Hall R.E."/>
            <person name="Hammond S."/>
            <person name="Harley J.L."/>
            <person name="Hart E.A."/>
            <person name="Heath P.D."/>
            <person name="Howden P.J."/>
            <person name="Huckle E.J."/>
            <person name="Hunt P.J."/>
            <person name="Hunt A.R."/>
            <person name="Johnson C."/>
            <person name="Johnson D."/>
            <person name="Kay M."/>
            <person name="Kimberley A.M."/>
            <person name="King A."/>
            <person name="Laird G.K."/>
            <person name="Langford C.J."/>
            <person name="Lawlor S."/>
            <person name="Leongamornlert D.A."/>
            <person name="Lloyd D.M."/>
            <person name="Lloyd C."/>
            <person name="Loveland J.E."/>
            <person name="Lovell J."/>
            <person name="Martin S."/>
            <person name="Mashreghi-Mohammadi M."/>
            <person name="McLaren S.J."/>
            <person name="McMurray A."/>
            <person name="Milne S."/>
            <person name="Moore M.J.F."/>
            <person name="Nickerson T."/>
            <person name="Palmer S.A."/>
            <person name="Pearce A.V."/>
            <person name="Peck A.I."/>
            <person name="Pelan S."/>
            <person name="Phillimore B."/>
            <person name="Porter K.M."/>
            <person name="Rice C.M."/>
            <person name="Searle S."/>
            <person name="Sehra H.K."/>
            <person name="Shownkeen R."/>
            <person name="Skuce C.D."/>
            <person name="Smith M."/>
            <person name="Steward C.A."/>
            <person name="Sycamore N."/>
            <person name="Tester J."/>
            <person name="Thomas D.W."/>
            <person name="Tracey A."/>
            <person name="Tromans A."/>
            <person name="Tubby B."/>
            <person name="Wall M."/>
            <person name="Wallis J.M."/>
            <person name="West A.P."/>
            <person name="Whitehead S.L."/>
            <person name="Willey D.L."/>
            <person name="Wilming L."/>
            <person name="Wray P.W."/>
            <person name="Wright M.W."/>
            <person name="Young L."/>
            <person name="Coulson A."/>
            <person name="Durbin R.M."/>
            <person name="Hubbard T."/>
            <person name="Sulston J.E."/>
            <person name="Beck S."/>
            <person name="Bentley D.R."/>
            <person name="Rogers J."/>
            <person name="Ross M.T."/>
        </authorList>
    </citation>
    <scope>NUCLEOTIDE SEQUENCE [LARGE SCALE GENOMIC DNA]</scope>
</reference>
<reference key="4">
    <citation type="journal article" date="2004" name="Genome Res.">
        <title>The status, quality, and expansion of the NIH full-length cDNA project: the Mammalian Gene Collection (MGC).</title>
        <authorList>
            <consortium name="The MGC Project Team"/>
        </authorList>
    </citation>
    <scope>NUCLEOTIDE SEQUENCE [LARGE SCALE MRNA] (ISOFORM 1)</scope>
    <scope>VARIANT VAL-241</scope>
    <source>
        <tissue>Skin</tissue>
    </source>
</reference>
<reference key="5">
    <citation type="journal article" date="2013" name="PLoS Genet.">
        <title>Genetic architecture of vitamin B12 and folate levels uncovered applying deeply sequenced large datasets.</title>
        <authorList>
            <person name="Grarup N."/>
            <person name="Sulem P."/>
            <person name="Sandholt C.H."/>
            <person name="Thorleifsson G."/>
            <person name="Ahluwalia T.S."/>
            <person name="Steinthorsdottir V."/>
            <person name="Bjarnason H."/>
            <person name="Gudbjartsson D.F."/>
            <person name="Magnusson O.T."/>
            <person name="Sparsoe T."/>
            <person name="Albrechtsen A."/>
            <person name="Kong A."/>
            <person name="Masson G."/>
            <person name="Tian G."/>
            <person name="Cao H."/>
            <person name="Nie C."/>
            <person name="Kristiansen K."/>
            <person name="Husemoen L.L."/>
            <person name="Thuesen B."/>
            <person name="Li Y."/>
            <person name="Nielsen R."/>
            <person name="Linneberg A."/>
            <person name="Olafsson I."/>
            <person name="Eyjolfsson G.I."/>
            <person name="Joergensen T."/>
            <person name="Wang J."/>
            <person name="Hansen T."/>
            <person name="Thorsteinsdottir U."/>
            <person name="Stefansson K."/>
            <person name="Pedersen O."/>
        </authorList>
    </citation>
    <scope>POLYMORPHISM</scope>
    <scope>VARIANT 259-ARG--LYS-340 DEL</scope>
    <scope>CHARACTERIZATION OF VARIANT 259-ARG--LYS-340 DEL</scope>
</reference>
<reference key="6">
    <citation type="journal article" date="2014" name="Hum. Mol. Genet.">
        <title>CLYBL is a polymorphic human enzyme with malate synthase and beta-methylmalate synthase activity.</title>
        <authorList>
            <person name="Strittmatter L."/>
            <person name="Li Y."/>
            <person name="Nakatsuka N.J."/>
            <person name="Calvo S.E."/>
            <person name="Grabarek Z."/>
            <person name="Mootha V.K."/>
        </authorList>
    </citation>
    <scope>FUNCTION</scope>
    <scope>CATALYTIC ACTIVITY</scope>
    <scope>BIOPHYSICOCHEMICAL PROPERTIES</scope>
    <scope>COFACTOR</scope>
    <scope>POLYMORPHISM</scope>
    <scope>VARIANT 259-ARG--LYS-340 DEL</scope>
    <scope>CHARACTERIZATION OF VARIANT 259-ARG--LYS-340 DEL</scope>
</reference>
<reference key="7">
    <citation type="journal article" date="2014" name="J. Proteomics">
        <title>An enzyme assisted RP-RPLC approach for in-depth analysis of human liver phosphoproteome.</title>
        <authorList>
            <person name="Bian Y."/>
            <person name="Song C."/>
            <person name="Cheng K."/>
            <person name="Dong M."/>
            <person name="Wang F."/>
            <person name="Huang J."/>
            <person name="Sun D."/>
            <person name="Wang L."/>
            <person name="Ye M."/>
            <person name="Zou H."/>
        </authorList>
    </citation>
    <scope>IDENTIFICATION BY MASS SPECTROMETRY [LARGE SCALE ANALYSIS]</scope>
    <source>
        <tissue>Liver</tissue>
    </source>
</reference>
<reference key="8">
    <citation type="journal article" date="2015" name="Proteomics">
        <title>N-terminome analysis of the human mitochondrial proteome.</title>
        <authorList>
            <person name="Vaca Jacome A.S."/>
            <person name="Rabilloud T."/>
            <person name="Schaeffer-Reiss C."/>
            <person name="Rompais M."/>
            <person name="Ayoub D."/>
            <person name="Lane L."/>
            <person name="Bairoch A."/>
            <person name="Van Dorsselaer A."/>
            <person name="Carapito C."/>
        </authorList>
    </citation>
    <scope>IDENTIFICATION BY MASS SPECTROMETRY [LARGE SCALE ANALYSIS]</scope>
</reference>
<reference key="9">
    <citation type="journal article" date="2017" name="Cell">
        <title>The human knockout gene CLYBL connects itaconate to vitamin B12.</title>
        <authorList>
            <person name="Shen H."/>
            <person name="Campanello G.C."/>
            <person name="Flicker D."/>
            <person name="Grabarek Z."/>
            <person name="Hu J."/>
            <person name="Luo C."/>
            <person name="Banerjee R."/>
            <person name="Mootha V.K."/>
        </authorList>
    </citation>
    <scope>X-RAY CRYSTALLOGRAPHY (1.9 ANGSTROMS) OF 23-340 IN COMPLEX WITH MAGNESIUM; COENZYME A AND PROPIONYL-COA</scope>
    <scope>FUNCTION</scope>
    <scope>CATALYTIC ACTIVITY</scope>
    <scope>COFACTOR</scope>
    <scope>SUBUNIT</scope>
    <scope>POLYMORPHISM</scope>
    <scope>ACTIVE SITE</scope>
    <scope>MUTAGENESIS OF ASP-320</scope>
</reference>
<sequence>MALRLLRRAARGAAAAALLRLKASLAADIPRLGYSSSSHHKYIPRRAVLYVPGNDEKKIKKIPSLNVDCAVLDCEDGVAANKKNEARLRIVKTLEDIDLGPTEKCVRVNSVSSGLAEEDLETLLQSRVLPSSLMLPKVESPEEIQWFADKFSFHLKGRKLEQPMNLIPFVETAMGLLNFKAVCEETLKVGPQVGLFLDAVVFGGEDFRASIGATSSKETLDILYARQKIVVIAKAFGLQAIDLVYIDFRDGAGLLRQSREGAAMGFTGKQVIHPNQIAVVQEQFSPSPEKIKWAEELIAAFKEHQQLGKGAFTFQGSMIDMPLLKQAQNTVTLATSIKEK</sequence>